<organism>
    <name type="scientific">Prosthecochloris aestuarii (strain DSM 271 / SK 413)</name>
    <dbReference type="NCBI Taxonomy" id="290512"/>
    <lineage>
        <taxon>Bacteria</taxon>
        <taxon>Pseudomonadati</taxon>
        <taxon>Chlorobiota</taxon>
        <taxon>Chlorobiia</taxon>
        <taxon>Chlorobiales</taxon>
        <taxon>Chlorobiaceae</taxon>
        <taxon>Prosthecochloris</taxon>
    </lineage>
</organism>
<name>MEND_PROA2</name>
<comment type="function">
    <text evidence="1">Catalyzes the thiamine diphosphate-dependent decarboxylation of 2-oxoglutarate and the subsequent addition of the resulting succinic semialdehyde-thiamine pyrophosphate anion to isochorismate to yield 2-succinyl-5-enolpyruvyl-6-hydroxy-3-cyclohexene-1-carboxylate (SEPHCHC).</text>
</comment>
<comment type="catalytic activity">
    <reaction evidence="1">
        <text>isochorismate + 2-oxoglutarate + H(+) = 5-enolpyruvoyl-6-hydroxy-2-succinyl-cyclohex-3-ene-1-carboxylate + CO2</text>
        <dbReference type="Rhea" id="RHEA:25593"/>
        <dbReference type="ChEBI" id="CHEBI:15378"/>
        <dbReference type="ChEBI" id="CHEBI:16526"/>
        <dbReference type="ChEBI" id="CHEBI:16810"/>
        <dbReference type="ChEBI" id="CHEBI:29780"/>
        <dbReference type="ChEBI" id="CHEBI:58818"/>
        <dbReference type="EC" id="2.2.1.9"/>
    </reaction>
</comment>
<comment type="cofactor">
    <cofactor evidence="1">
        <name>Mg(2+)</name>
        <dbReference type="ChEBI" id="CHEBI:18420"/>
    </cofactor>
    <cofactor evidence="1">
        <name>Mn(2+)</name>
        <dbReference type="ChEBI" id="CHEBI:29035"/>
    </cofactor>
</comment>
<comment type="cofactor">
    <cofactor evidence="1">
        <name>thiamine diphosphate</name>
        <dbReference type="ChEBI" id="CHEBI:58937"/>
    </cofactor>
    <text evidence="1">Binds 1 thiamine pyrophosphate per subunit.</text>
</comment>
<comment type="pathway">
    <text evidence="1">Quinol/quinone metabolism; 1,4-dihydroxy-2-naphthoate biosynthesis; 1,4-dihydroxy-2-naphthoate from chorismate: step 2/7.</text>
</comment>
<comment type="pathway">
    <text evidence="1">Quinol/quinone metabolism; menaquinone biosynthesis.</text>
</comment>
<comment type="subunit">
    <text evidence="1">Homodimer.</text>
</comment>
<comment type="similarity">
    <text evidence="1">Belongs to the TPP enzyme family. MenD subfamily.</text>
</comment>
<dbReference type="EC" id="2.2.1.9" evidence="1"/>
<dbReference type="EMBL" id="CP001108">
    <property type="protein sequence ID" value="ACF46890.1"/>
    <property type="molecule type" value="Genomic_DNA"/>
</dbReference>
<dbReference type="RefSeq" id="WP_012506423.1">
    <property type="nucleotide sequence ID" value="NC_011059.1"/>
</dbReference>
<dbReference type="SMR" id="B4S4J4"/>
<dbReference type="STRING" id="290512.Paes_1878"/>
<dbReference type="KEGG" id="paa:Paes_1878"/>
<dbReference type="eggNOG" id="COG1165">
    <property type="taxonomic scope" value="Bacteria"/>
</dbReference>
<dbReference type="HOGENOM" id="CLU_006051_3_0_10"/>
<dbReference type="UniPathway" id="UPA00079"/>
<dbReference type="UniPathway" id="UPA01057">
    <property type="reaction ID" value="UER00164"/>
</dbReference>
<dbReference type="Proteomes" id="UP000002725">
    <property type="component" value="Chromosome"/>
</dbReference>
<dbReference type="GO" id="GO:0070204">
    <property type="term" value="F:2-succinyl-5-enolpyruvyl-6-hydroxy-3-cyclohexene-1-carboxylic-acid synthase activity"/>
    <property type="evidence" value="ECO:0007669"/>
    <property type="project" value="UniProtKB-UniRule"/>
</dbReference>
<dbReference type="GO" id="GO:0000287">
    <property type="term" value="F:magnesium ion binding"/>
    <property type="evidence" value="ECO:0007669"/>
    <property type="project" value="UniProtKB-UniRule"/>
</dbReference>
<dbReference type="GO" id="GO:0030145">
    <property type="term" value="F:manganese ion binding"/>
    <property type="evidence" value="ECO:0007669"/>
    <property type="project" value="UniProtKB-UniRule"/>
</dbReference>
<dbReference type="GO" id="GO:0030976">
    <property type="term" value="F:thiamine pyrophosphate binding"/>
    <property type="evidence" value="ECO:0007669"/>
    <property type="project" value="UniProtKB-UniRule"/>
</dbReference>
<dbReference type="GO" id="GO:0009234">
    <property type="term" value="P:menaquinone biosynthetic process"/>
    <property type="evidence" value="ECO:0007669"/>
    <property type="project" value="UniProtKB-UniRule"/>
</dbReference>
<dbReference type="CDD" id="cd07037">
    <property type="entry name" value="TPP_PYR_MenD"/>
    <property type="match status" value="1"/>
</dbReference>
<dbReference type="CDD" id="cd02009">
    <property type="entry name" value="TPP_SHCHC_synthase"/>
    <property type="match status" value="1"/>
</dbReference>
<dbReference type="Gene3D" id="3.40.50.970">
    <property type="match status" value="2"/>
</dbReference>
<dbReference type="Gene3D" id="3.40.50.1220">
    <property type="entry name" value="TPP-binding domain"/>
    <property type="match status" value="1"/>
</dbReference>
<dbReference type="HAMAP" id="MF_01659">
    <property type="entry name" value="MenD"/>
    <property type="match status" value="1"/>
</dbReference>
<dbReference type="InterPro" id="IPR029035">
    <property type="entry name" value="DHS-like_NAD/FAD-binding_dom"/>
</dbReference>
<dbReference type="InterPro" id="IPR004433">
    <property type="entry name" value="MenaQ_synth_MenD"/>
</dbReference>
<dbReference type="InterPro" id="IPR032264">
    <property type="entry name" value="MenD_middle"/>
</dbReference>
<dbReference type="InterPro" id="IPR029061">
    <property type="entry name" value="THDP-binding"/>
</dbReference>
<dbReference type="InterPro" id="IPR012001">
    <property type="entry name" value="Thiamin_PyroP_enz_TPP-bd_dom"/>
</dbReference>
<dbReference type="InterPro" id="IPR011766">
    <property type="entry name" value="TPP_enzyme_TPP-bd"/>
</dbReference>
<dbReference type="NCBIfam" id="TIGR00173">
    <property type="entry name" value="menD"/>
    <property type="match status" value="1"/>
</dbReference>
<dbReference type="PANTHER" id="PTHR42916">
    <property type="entry name" value="2-SUCCINYL-5-ENOLPYRUVYL-6-HYDROXY-3-CYCLOHEXENE-1-CARBOXYLATE SYNTHASE"/>
    <property type="match status" value="1"/>
</dbReference>
<dbReference type="PANTHER" id="PTHR42916:SF1">
    <property type="entry name" value="PROTEIN PHYLLO, CHLOROPLASTIC"/>
    <property type="match status" value="1"/>
</dbReference>
<dbReference type="Pfam" id="PF02775">
    <property type="entry name" value="TPP_enzyme_C"/>
    <property type="match status" value="1"/>
</dbReference>
<dbReference type="Pfam" id="PF16582">
    <property type="entry name" value="TPP_enzyme_M_2"/>
    <property type="match status" value="1"/>
</dbReference>
<dbReference type="Pfam" id="PF02776">
    <property type="entry name" value="TPP_enzyme_N"/>
    <property type="match status" value="1"/>
</dbReference>
<dbReference type="PIRSF" id="PIRSF004983">
    <property type="entry name" value="MenD"/>
    <property type="match status" value="1"/>
</dbReference>
<dbReference type="SUPFAM" id="SSF52467">
    <property type="entry name" value="DHS-like NAD/FAD-binding domain"/>
    <property type="match status" value="1"/>
</dbReference>
<dbReference type="SUPFAM" id="SSF52518">
    <property type="entry name" value="Thiamin diphosphate-binding fold (THDP-binding)"/>
    <property type="match status" value="2"/>
</dbReference>
<proteinExistence type="inferred from homology"/>
<keyword id="KW-0460">Magnesium</keyword>
<keyword id="KW-0464">Manganese</keyword>
<keyword id="KW-0474">Menaquinone biosynthesis</keyword>
<keyword id="KW-0479">Metal-binding</keyword>
<keyword id="KW-0786">Thiamine pyrophosphate</keyword>
<keyword id="KW-0808">Transferase</keyword>
<evidence type="ECO:0000255" key="1">
    <source>
        <dbReference type="HAMAP-Rule" id="MF_01659"/>
    </source>
</evidence>
<accession>B4S4J4</accession>
<feature type="chain" id="PRO_1000187085" description="2-succinyl-5-enolpyruvyl-6-hydroxy-3-cyclohexene-1-carboxylate synthase">
    <location>
        <begin position="1"/>
        <end position="578"/>
    </location>
</feature>
<protein>
    <recommendedName>
        <fullName evidence="1">2-succinyl-5-enolpyruvyl-6-hydroxy-3-cyclohexene-1-carboxylate synthase</fullName>
        <shortName evidence="1">SEPHCHC synthase</shortName>
        <ecNumber evidence="1">2.2.1.9</ecNumber>
    </recommendedName>
    <alternativeName>
        <fullName evidence="1">Menaquinone biosynthesis protein MenD</fullName>
    </alternativeName>
</protein>
<reference key="1">
    <citation type="submission" date="2008-06" db="EMBL/GenBank/DDBJ databases">
        <title>Complete sequence of chromosome of Prosthecochloris aestuarii DSM 271.</title>
        <authorList>
            <consortium name="US DOE Joint Genome Institute"/>
            <person name="Lucas S."/>
            <person name="Copeland A."/>
            <person name="Lapidus A."/>
            <person name="Glavina del Rio T."/>
            <person name="Dalin E."/>
            <person name="Tice H."/>
            <person name="Bruce D."/>
            <person name="Goodwin L."/>
            <person name="Pitluck S."/>
            <person name="Schmutz J."/>
            <person name="Larimer F."/>
            <person name="Land M."/>
            <person name="Hauser L."/>
            <person name="Kyrpides N."/>
            <person name="Anderson I."/>
            <person name="Liu Z."/>
            <person name="Li T."/>
            <person name="Zhao F."/>
            <person name="Overmann J."/>
            <person name="Bryant D.A."/>
            <person name="Richardson P."/>
        </authorList>
    </citation>
    <scope>NUCLEOTIDE SEQUENCE [LARGE SCALE GENOMIC DNA]</scope>
    <source>
        <strain>DSM 271 / SK 413</strain>
    </source>
</reference>
<gene>
    <name evidence="1" type="primary">menD</name>
    <name type="ordered locus">Paes_1878</name>
</gene>
<sequence>MNHKEITTLWSWIIVEELVRNSICFFCISPGSRSTPLTVAASRHQKTTCKIFPDERAAAFFALGYARATGRPAVLICTSGTAAANYFPAVVEASMGHQPMLVLSADRPFELRETGANQTIRQSGIYGSYSRWSFQLPEPSTDTPPEAILSAIDYAVSTCTANPSGPVHLNIAFREPLEPVPLNENSPWLSSLGKWNSSRAPWSRTLQRQSSPESASVKEVARLLASAENPLIIAGHLDRPADAQAVLNLSKSLNIALYADISSQLRLHKETVALQQAWLSDKYVEQHRADLVLHFGGSLVGKKPGQAMKTWRPDHTIVIKNHPDRYAPDHTVTMSIEASVKAFAEALAKTSQPQGKKANPIDEIEQEIERFTRPDSPVTEISAARIVSRLIDPGHGLFLANSMPVRDMDMYATRSGGTIIPTAMNRGASGIDGIISSAAGFASGLERPVTLLIGDISFLHDMNALCLLRSMTVPLTIVVINNNGGGIFSFLPISDQPDVFEKNFGTPQEFNIAAAATAFSIEYQCPPSNAAFSESYMAARSSAETSIIEIRSRRDENLALHRKLNQSLIDRLDRQQSC</sequence>